<gene>
    <name type="primary">Mib2</name>
</gene>
<name>MIB2_RAT</name>
<keyword id="KW-0009">Actin-binding</keyword>
<keyword id="KW-0040">ANK repeat</keyword>
<keyword id="KW-0963">Cytoplasm</keyword>
<keyword id="KW-0967">Endosome</keyword>
<keyword id="KW-0479">Metal-binding</keyword>
<keyword id="KW-0914">Notch signaling pathway</keyword>
<keyword id="KW-0597">Phosphoprotein</keyword>
<keyword id="KW-1185">Reference proteome</keyword>
<keyword id="KW-0677">Repeat</keyword>
<keyword id="KW-0808">Transferase</keyword>
<keyword id="KW-0832">Ubl conjugation</keyword>
<keyword id="KW-0833">Ubl conjugation pathway</keyword>
<keyword id="KW-0862">Zinc</keyword>
<keyword id="KW-0863">Zinc-finger</keyword>
<feature type="chain" id="PRO_0000055949" description="E3 ubiquitin-protein ligase MIB2">
    <location>
        <begin position="1"/>
        <end position="971"/>
    </location>
</feature>
<feature type="domain" description="MIB/HERC2 1" evidence="5">
    <location>
        <begin position="1"/>
        <end position="80"/>
    </location>
</feature>
<feature type="domain" description="MIB/HERC2 2" evidence="5">
    <location>
        <begin position="149"/>
        <end position="227"/>
    </location>
</feature>
<feature type="repeat" description="ANK 1">
    <location>
        <begin position="478"/>
        <end position="507"/>
    </location>
</feature>
<feature type="repeat" description="ANK 2">
    <location>
        <begin position="511"/>
        <end position="540"/>
    </location>
</feature>
<feature type="repeat" description="ANK 3">
    <location>
        <begin position="544"/>
        <end position="573"/>
    </location>
</feature>
<feature type="repeat" description="ANK 4">
    <location>
        <begin position="577"/>
        <end position="609"/>
    </location>
</feature>
<feature type="repeat" description="ANK 5">
    <location>
        <begin position="613"/>
        <end position="642"/>
    </location>
</feature>
<feature type="repeat" description="ANK 6">
    <location>
        <begin position="647"/>
        <end position="677"/>
    </location>
</feature>
<feature type="repeat" description="ANK 7">
    <location>
        <begin position="681"/>
        <end position="710"/>
    </location>
</feature>
<feature type="repeat" description="ANK 8">
    <location>
        <begin position="714"/>
        <end position="742"/>
    </location>
</feature>
<feature type="repeat" description="ANK 9">
    <location>
        <begin position="783"/>
        <end position="812"/>
    </location>
</feature>
<feature type="zinc finger region" description="ZZ-type" evidence="4">
    <location>
        <begin position="86"/>
        <end position="138"/>
    </location>
</feature>
<feature type="zinc finger region" description="RING-type 1" evidence="3">
    <location>
        <begin position="848"/>
        <end position="883"/>
    </location>
</feature>
<feature type="zinc finger region" description="RING-type 2" evidence="3">
    <location>
        <begin position="927"/>
        <end position="960"/>
    </location>
</feature>
<feature type="binding site" evidence="4">
    <location>
        <position position="91"/>
    </location>
    <ligand>
        <name>Zn(2+)</name>
        <dbReference type="ChEBI" id="CHEBI:29105"/>
        <label>1</label>
    </ligand>
</feature>
<feature type="binding site" evidence="4">
    <location>
        <position position="94"/>
    </location>
    <ligand>
        <name>Zn(2+)</name>
        <dbReference type="ChEBI" id="CHEBI:29105"/>
        <label>1</label>
    </ligand>
</feature>
<feature type="binding site" evidence="4">
    <location>
        <position position="106"/>
    </location>
    <ligand>
        <name>Zn(2+)</name>
        <dbReference type="ChEBI" id="CHEBI:29105"/>
        <label>2</label>
    </ligand>
</feature>
<feature type="binding site" evidence="4">
    <location>
        <position position="109"/>
    </location>
    <ligand>
        <name>Zn(2+)</name>
        <dbReference type="ChEBI" id="CHEBI:29105"/>
        <label>2</label>
    </ligand>
</feature>
<feature type="binding site" evidence="4">
    <location>
        <position position="115"/>
    </location>
    <ligand>
        <name>Zn(2+)</name>
        <dbReference type="ChEBI" id="CHEBI:29105"/>
        <label>1</label>
    </ligand>
</feature>
<feature type="binding site" evidence="4">
    <location>
        <position position="118"/>
    </location>
    <ligand>
        <name>Zn(2+)</name>
        <dbReference type="ChEBI" id="CHEBI:29105"/>
        <label>1</label>
    </ligand>
</feature>
<feature type="binding site" evidence="4">
    <location>
        <position position="124"/>
    </location>
    <ligand>
        <name>Zn(2+)</name>
        <dbReference type="ChEBI" id="CHEBI:29105"/>
        <label>2</label>
    </ligand>
</feature>
<feature type="binding site" evidence="4">
    <location>
        <position position="128"/>
    </location>
    <ligand>
        <name>Zn(2+)</name>
        <dbReference type="ChEBI" id="CHEBI:29105"/>
        <label>2</label>
    </ligand>
</feature>
<feature type="modified residue" description="Phosphoserine" evidence="7">
    <location>
        <position position="251"/>
    </location>
</feature>
<dbReference type="EC" id="2.3.2.27"/>
<dbReference type="EMBL" id="AABR03042923">
    <property type="status" value="NOT_ANNOTATED_CDS"/>
    <property type="molecule type" value="Genomic_DNA"/>
</dbReference>
<dbReference type="EMBL" id="AABR03045598">
    <property type="status" value="NOT_ANNOTATED_CDS"/>
    <property type="molecule type" value="Genomic_DNA"/>
</dbReference>
<dbReference type="EMBL" id="AY675183">
    <property type="protein sequence ID" value="AAT94937.1"/>
    <property type="status" value="ALT_SEQ"/>
    <property type="molecule type" value="mRNA"/>
</dbReference>
<dbReference type="SMR" id="Q68LP1"/>
<dbReference type="FunCoup" id="Q68LP1">
    <property type="interactions" value="1965"/>
</dbReference>
<dbReference type="STRING" id="10116.ENSRNOP00000023696"/>
<dbReference type="GlyGen" id="Q68LP1">
    <property type="glycosylation" value="1 site"/>
</dbReference>
<dbReference type="iPTMnet" id="Q68LP1"/>
<dbReference type="PhosphoSitePlus" id="Q68LP1"/>
<dbReference type="PaxDb" id="10116-ENSRNOP00000023696"/>
<dbReference type="AGR" id="RGD:1359469"/>
<dbReference type="RGD" id="1359469">
    <property type="gene designation" value="Mib2"/>
</dbReference>
<dbReference type="eggNOG" id="KOG0504">
    <property type="taxonomic scope" value="Eukaryota"/>
</dbReference>
<dbReference type="eggNOG" id="KOG4582">
    <property type="taxonomic scope" value="Eukaryota"/>
</dbReference>
<dbReference type="HOGENOM" id="CLU_007287_2_0_1"/>
<dbReference type="InParanoid" id="Q68LP1"/>
<dbReference type="PhylomeDB" id="Q68LP1"/>
<dbReference type="Reactome" id="R-RNO-5357786">
    <property type="pathway name" value="TNFR1-induced proapoptotic signaling"/>
</dbReference>
<dbReference type="Reactome" id="R-RNO-5357905">
    <property type="pathway name" value="Regulation of TNFR1 signaling"/>
</dbReference>
<dbReference type="Reactome" id="R-RNO-983168">
    <property type="pathway name" value="Antigen processing: Ubiquitination &amp; Proteasome degradation"/>
</dbReference>
<dbReference type="UniPathway" id="UPA00143"/>
<dbReference type="PRO" id="PR:Q68LP1"/>
<dbReference type="Proteomes" id="UP000002494">
    <property type="component" value="Unplaced"/>
</dbReference>
<dbReference type="GO" id="GO:0005737">
    <property type="term" value="C:cytoplasm"/>
    <property type="evidence" value="ECO:0000318"/>
    <property type="project" value="GO_Central"/>
</dbReference>
<dbReference type="GO" id="GO:0005769">
    <property type="term" value="C:early endosome"/>
    <property type="evidence" value="ECO:0000266"/>
    <property type="project" value="RGD"/>
</dbReference>
<dbReference type="GO" id="GO:0098978">
    <property type="term" value="C:glutamatergic synapse"/>
    <property type="evidence" value="ECO:0000314"/>
    <property type="project" value="SynGO"/>
</dbReference>
<dbReference type="GO" id="GO:0005886">
    <property type="term" value="C:plasma membrane"/>
    <property type="evidence" value="ECO:0000266"/>
    <property type="project" value="RGD"/>
</dbReference>
<dbReference type="GO" id="GO:0098794">
    <property type="term" value="C:postsynapse"/>
    <property type="evidence" value="ECO:0000314"/>
    <property type="project" value="SynGO"/>
</dbReference>
<dbReference type="GO" id="GO:0000151">
    <property type="term" value="C:ubiquitin ligase complex"/>
    <property type="evidence" value="ECO:0000266"/>
    <property type="project" value="RGD"/>
</dbReference>
<dbReference type="GO" id="GO:0003779">
    <property type="term" value="F:actin binding"/>
    <property type="evidence" value="ECO:0007669"/>
    <property type="project" value="UniProtKB-KW"/>
</dbReference>
<dbReference type="GO" id="GO:0061630">
    <property type="term" value="F:ubiquitin protein ligase activity"/>
    <property type="evidence" value="ECO:0000266"/>
    <property type="project" value="RGD"/>
</dbReference>
<dbReference type="GO" id="GO:0004842">
    <property type="term" value="F:ubiquitin-protein transferase activity"/>
    <property type="evidence" value="ECO:0000266"/>
    <property type="project" value="RGD"/>
</dbReference>
<dbReference type="GO" id="GO:0008270">
    <property type="term" value="F:zinc ion binding"/>
    <property type="evidence" value="ECO:0007669"/>
    <property type="project" value="UniProtKB-KW"/>
</dbReference>
<dbReference type="GO" id="GO:0007219">
    <property type="term" value="P:Notch signaling pathway"/>
    <property type="evidence" value="ECO:0007669"/>
    <property type="project" value="UniProtKB-KW"/>
</dbReference>
<dbReference type="GO" id="GO:0016567">
    <property type="term" value="P:protein ubiquitination"/>
    <property type="evidence" value="ECO:0000266"/>
    <property type="project" value="RGD"/>
</dbReference>
<dbReference type="GO" id="GO:0099149">
    <property type="term" value="P:regulation of postsynaptic neurotransmitter receptor internalization"/>
    <property type="evidence" value="ECO:0000314"/>
    <property type="project" value="SynGO"/>
</dbReference>
<dbReference type="GO" id="GO:0140252">
    <property type="term" value="P:regulation protein catabolic process at postsynapse"/>
    <property type="evidence" value="ECO:0000314"/>
    <property type="project" value="SynGO"/>
</dbReference>
<dbReference type="CDD" id="cd16726">
    <property type="entry name" value="RING-HC_MIB2_rpt1"/>
    <property type="match status" value="1"/>
</dbReference>
<dbReference type="CDD" id="cd02339">
    <property type="entry name" value="ZZ_Mind_bomb"/>
    <property type="match status" value="1"/>
</dbReference>
<dbReference type="FunFam" id="1.25.40.20:FF:000075">
    <property type="entry name" value="E3 ubiquitin-protein ligase MIB2 isoform X1"/>
    <property type="match status" value="1"/>
</dbReference>
<dbReference type="FunFam" id="3.30.40.10:FF:000094">
    <property type="entry name" value="E3 ubiquitin-protein ligase MIB2 isoform X1"/>
    <property type="match status" value="1"/>
</dbReference>
<dbReference type="FunFam" id="3.30.40.10:FF:000250">
    <property type="entry name" value="E3 ubiquitin-protein ligase MIB2 isoform X2"/>
    <property type="match status" value="1"/>
</dbReference>
<dbReference type="FunFam" id="1.25.40.20:FF:000158">
    <property type="entry name" value="E3 ubiquitin-protein ligase MIB2 isoform X3"/>
    <property type="match status" value="1"/>
</dbReference>
<dbReference type="FunFam" id="2.30.30.40:FF:000044">
    <property type="entry name" value="E3 ubiquitin-protein ligase MIB2, putative"/>
    <property type="match status" value="1"/>
</dbReference>
<dbReference type="FunFam" id="3.30.60.90:FF:000004">
    <property type="entry name" value="Putative E3 ubiquitin-protein ligase MIB2"/>
    <property type="match status" value="1"/>
</dbReference>
<dbReference type="FunFam" id="2.30.30.40:FF:000078">
    <property type="entry name" value="Putative e3 ubiquitin-protein ligase mib2"/>
    <property type="match status" value="1"/>
</dbReference>
<dbReference type="Gene3D" id="3.30.60.90">
    <property type="match status" value="1"/>
</dbReference>
<dbReference type="Gene3D" id="1.25.40.20">
    <property type="entry name" value="Ankyrin repeat-containing domain"/>
    <property type="match status" value="3"/>
</dbReference>
<dbReference type="Gene3D" id="2.30.30.40">
    <property type="entry name" value="SH3 Domains"/>
    <property type="match status" value="2"/>
</dbReference>
<dbReference type="Gene3D" id="3.30.40.10">
    <property type="entry name" value="Zinc/RING finger domain, C3HC4 (zinc finger)"/>
    <property type="match status" value="2"/>
</dbReference>
<dbReference type="InterPro" id="IPR002110">
    <property type="entry name" value="Ankyrin_rpt"/>
</dbReference>
<dbReference type="InterPro" id="IPR036770">
    <property type="entry name" value="Ankyrin_rpt-contain_sf"/>
</dbReference>
<dbReference type="InterPro" id="IPR042056">
    <property type="entry name" value="MIB1/2_ZZ"/>
</dbReference>
<dbReference type="InterPro" id="IPR010606">
    <property type="entry name" value="Mib_Herc2"/>
</dbReference>
<dbReference type="InterPro" id="IPR037252">
    <property type="entry name" value="Mib_Herc2_sf"/>
</dbReference>
<dbReference type="InterPro" id="IPR040847">
    <property type="entry name" value="SH3_15"/>
</dbReference>
<dbReference type="InterPro" id="IPR001841">
    <property type="entry name" value="Znf_RING"/>
</dbReference>
<dbReference type="InterPro" id="IPR013083">
    <property type="entry name" value="Znf_RING/FYVE/PHD"/>
</dbReference>
<dbReference type="InterPro" id="IPR000433">
    <property type="entry name" value="Znf_ZZ"/>
</dbReference>
<dbReference type="InterPro" id="IPR043145">
    <property type="entry name" value="Znf_ZZ_sf"/>
</dbReference>
<dbReference type="PANTHER" id="PTHR24202">
    <property type="entry name" value="E3 UBIQUITIN-PROTEIN LIGASE MIB2"/>
    <property type="match status" value="1"/>
</dbReference>
<dbReference type="PANTHER" id="PTHR24202:SF4">
    <property type="entry name" value="E3 UBIQUITIN-PROTEIN LIGASE MIB2-RELATED"/>
    <property type="match status" value="1"/>
</dbReference>
<dbReference type="Pfam" id="PF00023">
    <property type="entry name" value="Ank"/>
    <property type="match status" value="1"/>
</dbReference>
<dbReference type="Pfam" id="PF12796">
    <property type="entry name" value="Ank_2"/>
    <property type="match status" value="1"/>
</dbReference>
<dbReference type="Pfam" id="PF13857">
    <property type="entry name" value="Ank_5"/>
    <property type="match status" value="1"/>
</dbReference>
<dbReference type="Pfam" id="PF06701">
    <property type="entry name" value="MIB_HERC2"/>
    <property type="match status" value="2"/>
</dbReference>
<dbReference type="Pfam" id="PF18346">
    <property type="entry name" value="SH3_15"/>
    <property type="match status" value="2"/>
</dbReference>
<dbReference type="Pfam" id="PF13920">
    <property type="entry name" value="zf-C3HC4_3"/>
    <property type="match status" value="2"/>
</dbReference>
<dbReference type="Pfam" id="PF00569">
    <property type="entry name" value="ZZ"/>
    <property type="match status" value="1"/>
</dbReference>
<dbReference type="PRINTS" id="PR01415">
    <property type="entry name" value="ANKYRIN"/>
</dbReference>
<dbReference type="SMART" id="SM00248">
    <property type="entry name" value="ANK"/>
    <property type="match status" value="8"/>
</dbReference>
<dbReference type="SMART" id="SM00184">
    <property type="entry name" value="RING"/>
    <property type="match status" value="2"/>
</dbReference>
<dbReference type="SMART" id="SM00291">
    <property type="entry name" value="ZnF_ZZ"/>
    <property type="match status" value="1"/>
</dbReference>
<dbReference type="SUPFAM" id="SSF48403">
    <property type="entry name" value="Ankyrin repeat"/>
    <property type="match status" value="1"/>
</dbReference>
<dbReference type="SUPFAM" id="SSF159034">
    <property type="entry name" value="Mib/herc2 domain-like"/>
    <property type="match status" value="2"/>
</dbReference>
<dbReference type="SUPFAM" id="SSF57850">
    <property type="entry name" value="RING/U-box"/>
    <property type="match status" value="2"/>
</dbReference>
<dbReference type="PROSITE" id="PS50297">
    <property type="entry name" value="ANK_REP_REGION"/>
    <property type="match status" value="1"/>
</dbReference>
<dbReference type="PROSITE" id="PS50088">
    <property type="entry name" value="ANK_REPEAT"/>
    <property type="match status" value="5"/>
</dbReference>
<dbReference type="PROSITE" id="PS51416">
    <property type="entry name" value="MIB_HERC2"/>
    <property type="match status" value="2"/>
</dbReference>
<dbReference type="PROSITE" id="PS50089">
    <property type="entry name" value="ZF_RING_2"/>
    <property type="match status" value="2"/>
</dbReference>
<dbReference type="PROSITE" id="PS01357">
    <property type="entry name" value="ZF_ZZ_1"/>
    <property type="match status" value="1"/>
</dbReference>
<dbReference type="PROSITE" id="PS50135">
    <property type="entry name" value="ZF_ZZ_2"/>
    <property type="match status" value="1"/>
</dbReference>
<proteinExistence type="evidence at protein level"/>
<accession>Q68LP1</accession>
<organism>
    <name type="scientific">Rattus norvegicus</name>
    <name type="common">Rat</name>
    <dbReference type="NCBI Taxonomy" id="10116"/>
    <lineage>
        <taxon>Eukaryota</taxon>
        <taxon>Metazoa</taxon>
        <taxon>Chordata</taxon>
        <taxon>Craniata</taxon>
        <taxon>Vertebrata</taxon>
        <taxon>Euteleostomi</taxon>
        <taxon>Mammalia</taxon>
        <taxon>Eutheria</taxon>
        <taxon>Euarchontoglires</taxon>
        <taxon>Glires</taxon>
        <taxon>Rodentia</taxon>
        <taxon>Myomorpha</taxon>
        <taxon>Muroidea</taxon>
        <taxon>Muridae</taxon>
        <taxon>Murinae</taxon>
        <taxon>Rattus</taxon>
    </lineage>
</organism>
<comment type="function">
    <text evidence="2">E3 ubiquitin-protein ligase that mediates ubiquitination of Delta receptors, which act as ligands of Notch proteins. Positively regulates the Delta-mediated Notch signaling by ubiquitinating the intracellular domain of Delta, leading to endocytosis of Delta receptors.</text>
</comment>
<comment type="catalytic activity">
    <reaction>
        <text>S-ubiquitinyl-[E2 ubiquitin-conjugating enzyme]-L-cysteine + [acceptor protein]-L-lysine = [E2 ubiquitin-conjugating enzyme]-L-cysteine + N(6)-ubiquitinyl-[acceptor protein]-L-lysine.</text>
        <dbReference type="EC" id="2.3.2.27"/>
    </reaction>
</comment>
<comment type="pathway">
    <text>Protein modification; protein ubiquitination.</text>
</comment>
<comment type="subunit">
    <text evidence="1">Interacts with actin monomer.</text>
</comment>
<comment type="subcellular location">
    <subcellularLocation>
        <location evidence="1">Cytoplasm</location>
    </subcellularLocation>
    <subcellularLocation>
        <location evidence="1">Endosome</location>
    </subcellularLocation>
    <text evidence="1">Colocalizes with endosomal compartments.</text>
</comment>
<comment type="PTM">
    <text evidence="1">Ubiquitinated. Possibly via autoubiquitination (By similarity).</text>
</comment>
<comment type="sequence caution" evidence="6">
    <conflict type="miscellaneous discrepancy">
        <sequence resource="EMBL-CDS" id="AAT94937"/>
    </conflict>
    <text>Chimeric cDNA.</text>
</comment>
<protein>
    <recommendedName>
        <fullName>E3 ubiquitin-protein ligase MIB2</fullName>
        <ecNumber>2.3.2.27</ecNumber>
    </recommendedName>
    <alternativeName>
        <fullName>Mind bomb homolog 2</fullName>
    </alternativeName>
    <alternativeName>
        <fullName>RBSC-skeletrophin/dystrophin-like polypeptide</fullName>
    </alternativeName>
    <alternativeName>
        <fullName evidence="6">RING-type E3 ubiquitin transferase MIB2</fullName>
    </alternativeName>
</protein>
<evidence type="ECO:0000250" key="1"/>
<evidence type="ECO:0000250" key="2">
    <source>
        <dbReference type="UniProtKB" id="Q8R516"/>
    </source>
</evidence>
<evidence type="ECO:0000255" key="3">
    <source>
        <dbReference type="PROSITE-ProRule" id="PRU00175"/>
    </source>
</evidence>
<evidence type="ECO:0000255" key="4">
    <source>
        <dbReference type="PROSITE-ProRule" id="PRU00228"/>
    </source>
</evidence>
<evidence type="ECO:0000255" key="5">
    <source>
        <dbReference type="PROSITE-ProRule" id="PRU00749"/>
    </source>
</evidence>
<evidence type="ECO:0000305" key="6"/>
<evidence type="ECO:0007744" key="7">
    <source>
    </source>
</evidence>
<reference key="1">
    <citation type="journal article" date="2004" name="Nature">
        <title>Genome sequence of the Brown Norway rat yields insights into mammalian evolution.</title>
        <authorList>
            <person name="Gibbs R.A."/>
            <person name="Weinstock G.M."/>
            <person name="Metzker M.L."/>
            <person name="Muzny D.M."/>
            <person name="Sodergren E.J."/>
            <person name="Scherer S."/>
            <person name="Scott G."/>
            <person name="Steffen D."/>
            <person name="Worley K.C."/>
            <person name="Burch P.E."/>
            <person name="Okwuonu G."/>
            <person name="Hines S."/>
            <person name="Lewis L."/>
            <person name="Deramo C."/>
            <person name="Delgado O."/>
            <person name="Dugan-Rocha S."/>
            <person name="Miner G."/>
            <person name="Morgan M."/>
            <person name="Hawes A."/>
            <person name="Gill R."/>
            <person name="Holt R.A."/>
            <person name="Adams M.D."/>
            <person name="Amanatides P.G."/>
            <person name="Baden-Tillson H."/>
            <person name="Barnstead M."/>
            <person name="Chin S."/>
            <person name="Evans C.A."/>
            <person name="Ferriera S."/>
            <person name="Fosler C."/>
            <person name="Glodek A."/>
            <person name="Gu Z."/>
            <person name="Jennings D."/>
            <person name="Kraft C.L."/>
            <person name="Nguyen T."/>
            <person name="Pfannkoch C.M."/>
            <person name="Sitter C."/>
            <person name="Sutton G.G."/>
            <person name="Venter J.C."/>
            <person name="Woodage T."/>
            <person name="Smith D."/>
            <person name="Lee H.-M."/>
            <person name="Gustafson E."/>
            <person name="Cahill P."/>
            <person name="Kana A."/>
            <person name="Doucette-Stamm L."/>
            <person name="Weinstock K."/>
            <person name="Fechtel K."/>
            <person name="Weiss R.B."/>
            <person name="Dunn D.M."/>
            <person name="Green E.D."/>
            <person name="Blakesley R.W."/>
            <person name="Bouffard G.G."/>
            <person name="De Jong P.J."/>
            <person name="Osoegawa K."/>
            <person name="Zhu B."/>
            <person name="Marra M."/>
            <person name="Schein J."/>
            <person name="Bosdet I."/>
            <person name="Fjell C."/>
            <person name="Jones S."/>
            <person name="Krzywinski M."/>
            <person name="Mathewson C."/>
            <person name="Siddiqui A."/>
            <person name="Wye N."/>
            <person name="McPherson J."/>
            <person name="Zhao S."/>
            <person name="Fraser C.M."/>
            <person name="Shetty J."/>
            <person name="Shatsman S."/>
            <person name="Geer K."/>
            <person name="Chen Y."/>
            <person name="Abramzon S."/>
            <person name="Nierman W.C."/>
            <person name="Havlak P.H."/>
            <person name="Chen R."/>
            <person name="Durbin K.J."/>
            <person name="Egan A."/>
            <person name="Ren Y."/>
            <person name="Song X.-Z."/>
            <person name="Li B."/>
            <person name="Liu Y."/>
            <person name="Qin X."/>
            <person name="Cawley S."/>
            <person name="Cooney A.J."/>
            <person name="D'Souza L.M."/>
            <person name="Martin K."/>
            <person name="Wu J.Q."/>
            <person name="Gonzalez-Garay M.L."/>
            <person name="Jackson A.R."/>
            <person name="Kalafus K.J."/>
            <person name="McLeod M.P."/>
            <person name="Milosavljevic A."/>
            <person name="Virk D."/>
            <person name="Volkov A."/>
            <person name="Wheeler D.A."/>
            <person name="Zhang Z."/>
            <person name="Bailey J.A."/>
            <person name="Eichler E.E."/>
            <person name="Tuzun E."/>
            <person name="Birney E."/>
            <person name="Mongin E."/>
            <person name="Ureta-Vidal A."/>
            <person name="Woodwark C."/>
            <person name="Zdobnov E."/>
            <person name="Bork P."/>
            <person name="Suyama M."/>
            <person name="Torrents D."/>
            <person name="Alexandersson M."/>
            <person name="Trask B.J."/>
            <person name="Young J.M."/>
            <person name="Huang H."/>
            <person name="Wang H."/>
            <person name="Xing H."/>
            <person name="Daniels S."/>
            <person name="Gietzen D."/>
            <person name="Schmidt J."/>
            <person name="Stevens K."/>
            <person name="Vitt U."/>
            <person name="Wingrove J."/>
            <person name="Camara F."/>
            <person name="Mar Alba M."/>
            <person name="Abril J.F."/>
            <person name="Guigo R."/>
            <person name="Smit A."/>
            <person name="Dubchak I."/>
            <person name="Rubin E.M."/>
            <person name="Couronne O."/>
            <person name="Poliakov A."/>
            <person name="Huebner N."/>
            <person name="Ganten D."/>
            <person name="Goesele C."/>
            <person name="Hummel O."/>
            <person name="Kreitler T."/>
            <person name="Lee Y.-A."/>
            <person name="Monti J."/>
            <person name="Schulz H."/>
            <person name="Zimdahl H."/>
            <person name="Himmelbauer H."/>
            <person name="Lehrach H."/>
            <person name="Jacob H.J."/>
            <person name="Bromberg S."/>
            <person name="Gullings-Handley J."/>
            <person name="Jensen-Seaman M.I."/>
            <person name="Kwitek A.E."/>
            <person name="Lazar J."/>
            <person name="Pasko D."/>
            <person name="Tonellato P.J."/>
            <person name="Twigger S."/>
            <person name="Ponting C.P."/>
            <person name="Duarte J.M."/>
            <person name="Rice S."/>
            <person name="Goodstadt L."/>
            <person name="Beatson S.A."/>
            <person name="Emes R.D."/>
            <person name="Winter E.E."/>
            <person name="Webber C."/>
            <person name="Brandt P."/>
            <person name="Nyakatura G."/>
            <person name="Adetobi M."/>
            <person name="Chiaromonte F."/>
            <person name="Elnitski L."/>
            <person name="Eswara P."/>
            <person name="Hardison R.C."/>
            <person name="Hou M."/>
            <person name="Kolbe D."/>
            <person name="Makova K."/>
            <person name="Miller W."/>
            <person name="Nekrutenko A."/>
            <person name="Riemer C."/>
            <person name="Schwartz S."/>
            <person name="Taylor J."/>
            <person name="Yang S."/>
            <person name="Zhang Y."/>
            <person name="Lindpaintner K."/>
            <person name="Andrews T.D."/>
            <person name="Caccamo M."/>
            <person name="Clamp M."/>
            <person name="Clarke L."/>
            <person name="Curwen V."/>
            <person name="Durbin R.M."/>
            <person name="Eyras E."/>
            <person name="Searle S.M."/>
            <person name="Cooper G.M."/>
            <person name="Batzoglou S."/>
            <person name="Brudno M."/>
            <person name="Sidow A."/>
            <person name="Stone E.A."/>
            <person name="Payseur B.A."/>
            <person name="Bourque G."/>
            <person name="Lopez-Otin C."/>
            <person name="Puente X.S."/>
            <person name="Chakrabarti K."/>
            <person name="Chatterji S."/>
            <person name="Dewey C."/>
            <person name="Pachter L."/>
            <person name="Bray N."/>
            <person name="Yap V.B."/>
            <person name="Caspi A."/>
            <person name="Tesler G."/>
            <person name="Pevzner P.A."/>
            <person name="Haussler D."/>
            <person name="Roskin K.M."/>
            <person name="Baertsch R."/>
            <person name="Clawson H."/>
            <person name="Furey T.S."/>
            <person name="Hinrichs A.S."/>
            <person name="Karolchik D."/>
            <person name="Kent W.J."/>
            <person name="Rosenbloom K.R."/>
            <person name="Trumbower H."/>
            <person name="Weirauch M."/>
            <person name="Cooper D.N."/>
            <person name="Stenson P.D."/>
            <person name="Ma B."/>
            <person name="Brent M."/>
            <person name="Arumugam M."/>
            <person name="Shteynberg D."/>
            <person name="Copley R.R."/>
            <person name="Taylor M.S."/>
            <person name="Riethman H."/>
            <person name="Mudunuri U."/>
            <person name="Peterson J."/>
            <person name="Guyer M."/>
            <person name="Felsenfeld A."/>
            <person name="Old S."/>
            <person name="Mockrin S."/>
            <person name="Collins F.S."/>
        </authorList>
    </citation>
    <scope>NUCLEOTIDE SEQUENCE [LARGE SCALE GENOMIC DNA]</scope>
    <source>
        <strain>Brown Norway</strain>
    </source>
</reference>
<reference key="2">
    <citation type="submission" date="2004-07" db="EMBL/GenBank/DDBJ databases">
        <authorList>
            <person name="Leff P."/>
            <person name="Matus M."/>
            <person name="Gonzaga R."/>
            <person name="Arreola R."/>
            <person name="Salazar A."/>
            <person name="Calva J.C."/>
            <person name="Acevedo R."/>
            <person name="Flores A."/>
            <person name="Martinez C."/>
            <person name="Cervantes R."/>
            <person name="Retana I."/>
            <person name="Arias A."/>
            <person name="Parra L."/>
            <person name="Barbosa S."/>
            <person name="Pavon L."/>
            <person name="Gonzalez R."/>
            <person name="Alagon A."/>
            <person name="Anton B."/>
        </authorList>
    </citation>
    <scope>NUCLEOTIDE SEQUENCE [MRNA] OF 1-85</scope>
    <source>
        <strain>Sprague-Dawley</strain>
        <tissue>Brain stem</tissue>
    </source>
</reference>
<reference key="3">
    <citation type="journal article" date="2012" name="Nat. Commun.">
        <title>Quantitative maps of protein phosphorylation sites across 14 different rat organs and tissues.</title>
        <authorList>
            <person name="Lundby A."/>
            <person name="Secher A."/>
            <person name="Lage K."/>
            <person name="Nordsborg N.B."/>
            <person name="Dmytriyev A."/>
            <person name="Lundby C."/>
            <person name="Olsen J.V."/>
        </authorList>
    </citation>
    <scope>PHOSPHORYLATION [LARGE SCALE ANALYSIS] AT SER-251</scope>
    <scope>IDENTIFICATION BY MASS SPECTROMETRY [LARGE SCALE ANALYSIS]</scope>
</reference>
<sequence length="971" mass="105542">MDLDPHAGVQVGMRVVRGMDWKWGQQDGGEGGVGTVVELGRHGSPSTPDRTVVVQWDQGTRTNYRAGYQGAHDLLLYDNAQIGIRHPNIICDCCKKHGLRGMRWKCRVCFDYDLCTQCYMHNKHDLTHAFERYETSHSRPVTLSPRQGLPRIPLRGIFQGAKVVRGPDWEWGSQDGGEGKTGRVVDIRGWDVETGRSVASVTWADGTTNVYRVGHKGKVDLKCVGEAAGGFYYKEHLPKLGKPAELQRRVSADGQPFQRGDKVKCLLDTDVLRDMQEGHGGWNPRMAEFIGQMGTVHRITDRGDVRVQFNHETRWTFHPGALTKHNSFWVGDVVRVIDDLDTVKRLQAGHGEWTDDMAPALGRVGKVVKVFGDGNLRVAVGGQRWTFSPACLVACRPEEDANLGVAERARENKSAASVPVAGSLSVALDKLRTQKSDPEHPGRLVVEAALGNVARALDLLRRHPEQAGFHPAVDTKNQGRTALQVAAYLGQVELVRLLLQARASVDLLDEEGNTALHYTAMGNQPEATRLLLSAGCGVDAQNGTRSTALHVAVQRGFLEVVKILCEHGCDVNLPDAHADTPLHSAISAGAGASSIVEVLTEVPGIDVTATNSQGFTLLHHASLKGHVLAVRKILARARQLVDAKKEDGFTALHLAALNNHREVAQVLIREGRCDVNVRNRKLQSPLHLAVQQAHLGLVPLLVDAGCNVNTEDEEGDTALHVALQRHQLLPLVADRAGGDPGPLQLLSRLQASGLPGSTELTVGAAVACFLALEGADVSYANHRGRSPLDLATEGRVLKALQGCAQRFRERQAGGGGGVPPGPRHVLSTPNTVTNLHVSGTAGPEAAECLVCSELALLVLFSPCQHRTVCEECARRMKKCIRCQVIISKKLRPDGSEVVNAIQVPGPPRQLVEELQSRYRQMEERITCPICIDSHIRLVFQCGHGACAPCGAALNACPICRQPIRDRIQIFV</sequence>